<proteinExistence type="inferred from homology"/>
<comment type="function">
    <text evidence="1">Catalyzes the prenylation of para-hydroxybenzoate (PHB) with an all-trans polyprenyl group. Mediates the second step in the final reaction sequence of ubiquinone-8 (UQ-8) biosynthesis, which is the condensation of the polyisoprenoid side chain with PHB, generating the first membrane-bound Q intermediate 3-octaprenyl-4-hydroxybenzoate.</text>
</comment>
<comment type="catalytic activity">
    <reaction evidence="1">
        <text>all-trans-octaprenyl diphosphate + 4-hydroxybenzoate = 4-hydroxy-3-(all-trans-octaprenyl)benzoate + diphosphate</text>
        <dbReference type="Rhea" id="RHEA:27782"/>
        <dbReference type="ChEBI" id="CHEBI:1617"/>
        <dbReference type="ChEBI" id="CHEBI:17879"/>
        <dbReference type="ChEBI" id="CHEBI:33019"/>
        <dbReference type="ChEBI" id="CHEBI:57711"/>
        <dbReference type="EC" id="2.5.1.39"/>
    </reaction>
</comment>
<comment type="cofactor">
    <cofactor evidence="1">
        <name>Mg(2+)</name>
        <dbReference type="ChEBI" id="CHEBI:18420"/>
    </cofactor>
</comment>
<comment type="pathway">
    <text evidence="1">Cofactor biosynthesis; ubiquinone biosynthesis.</text>
</comment>
<comment type="subcellular location">
    <subcellularLocation>
        <location evidence="1">Cell inner membrane</location>
        <topology evidence="1">Multi-pass membrane protein</topology>
    </subcellularLocation>
</comment>
<comment type="similarity">
    <text evidence="1">Belongs to the UbiA prenyltransferase family.</text>
</comment>
<sequence>MSADSSDAAHPSGLARVPDFLRLTRLDRPIGTWLLMWPTLWALWLAAEGIPERGTLLIFVIGVYVMRAAGCVVNDYADRHFDGHVKRTRDRPLATGRITEKEAKVLFAGLVIIAFGLVCLTNLPTVLLSFAALALAATYPFMKRYTHFPQVVLGAAFSWGIPMAFMAIQRQVPLEAWLLLAANVAWTVAYDTEYAMVDRDDDLKVGIKSTAVLFGRADRLMIGLLQALTLLLLAWVGLRLALGGFFWLGLAAMGAIFVFQHRLIRHRERDHCFRAFLNNHWAGLVVFAGIALSLWPML</sequence>
<gene>
    <name evidence="1" type="primary">ubiA</name>
    <name type="ordered locus">Csal_3252</name>
</gene>
<feature type="chain" id="PRO_0000262788" description="4-hydroxybenzoate octaprenyltransferase">
    <location>
        <begin position="1"/>
        <end position="298"/>
    </location>
</feature>
<feature type="transmembrane region" description="Helical" evidence="1">
    <location>
        <begin position="30"/>
        <end position="50"/>
    </location>
</feature>
<feature type="transmembrane region" description="Helical" evidence="1">
    <location>
        <begin position="54"/>
        <end position="74"/>
    </location>
</feature>
<feature type="transmembrane region" description="Helical" evidence="1">
    <location>
        <begin position="105"/>
        <end position="125"/>
    </location>
</feature>
<feature type="transmembrane region" description="Helical" evidence="1">
    <location>
        <begin position="148"/>
        <end position="168"/>
    </location>
</feature>
<feature type="transmembrane region" description="Helical" evidence="1">
    <location>
        <begin position="218"/>
        <end position="238"/>
    </location>
</feature>
<feature type="transmembrane region" description="Helical" evidence="1">
    <location>
        <begin position="240"/>
        <end position="260"/>
    </location>
</feature>
<feature type="transmembrane region" description="Helical" evidence="1">
    <location>
        <begin position="275"/>
        <end position="295"/>
    </location>
</feature>
<evidence type="ECO:0000255" key="1">
    <source>
        <dbReference type="HAMAP-Rule" id="MF_01635"/>
    </source>
</evidence>
<protein>
    <recommendedName>
        <fullName evidence="1">4-hydroxybenzoate octaprenyltransferase</fullName>
        <ecNumber evidence="1">2.5.1.39</ecNumber>
    </recommendedName>
    <alternativeName>
        <fullName evidence="1">4-HB polyprenyltransferase</fullName>
    </alternativeName>
</protein>
<dbReference type="EC" id="2.5.1.39" evidence="1"/>
<dbReference type="EMBL" id="CP000285">
    <property type="protein sequence ID" value="ABE60596.1"/>
    <property type="molecule type" value="Genomic_DNA"/>
</dbReference>
<dbReference type="RefSeq" id="WP_011508542.1">
    <property type="nucleotide sequence ID" value="NC_007963.1"/>
</dbReference>
<dbReference type="SMR" id="Q1QSG2"/>
<dbReference type="STRING" id="290398.Csal_3252"/>
<dbReference type="GeneID" id="95335944"/>
<dbReference type="KEGG" id="csa:Csal_3252"/>
<dbReference type="eggNOG" id="COG0382">
    <property type="taxonomic scope" value="Bacteria"/>
</dbReference>
<dbReference type="HOGENOM" id="CLU_034879_1_0_6"/>
<dbReference type="OrthoDB" id="9782418at2"/>
<dbReference type="UniPathway" id="UPA00232"/>
<dbReference type="Proteomes" id="UP000000239">
    <property type="component" value="Chromosome"/>
</dbReference>
<dbReference type="GO" id="GO:0005886">
    <property type="term" value="C:plasma membrane"/>
    <property type="evidence" value="ECO:0007669"/>
    <property type="project" value="UniProtKB-SubCell"/>
</dbReference>
<dbReference type="GO" id="GO:0008412">
    <property type="term" value="F:4-hydroxybenzoate polyprenyltransferase activity"/>
    <property type="evidence" value="ECO:0007669"/>
    <property type="project" value="UniProtKB-UniRule"/>
</dbReference>
<dbReference type="GO" id="GO:0006744">
    <property type="term" value="P:ubiquinone biosynthetic process"/>
    <property type="evidence" value="ECO:0007669"/>
    <property type="project" value="UniProtKB-UniRule"/>
</dbReference>
<dbReference type="CDD" id="cd13959">
    <property type="entry name" value="PT_UbiA_COQ2"/>
    <property type="match status" value="1"/>
</dbReference>
<dbReference type="FunFam" id="1.10.357.140:FF:000002">
    <property type="entry name" value="4-hydroxybenzoate octaprenyltransferase"/>
    <property type="match status" value="1"/>
</dbReference>
<dbReference type="FunFam" id="1.20.120.1780:FF:000001">
    <property type="entry name" value="4-hydroxybenzoate octaprenyltransferase"/>
    <property type="match status" value="1"/>
</dbReference>
<dbReference type="Gene3D" id="1.10.357.140">
    <property type="entry name" value="UbiA prenyltransferase"/>
    <property type="match status" value="1"/>
</dbReference>
<dbReference type="Gene3D" id="1.20.120.1780">
    <property type="entry name" value="UbiA prenyltransferase"/>
    <property type="match status" value="1"/>
</dbReference>
<dbReference type="HAMAP" id="MF_01635">
    <property type="entry name" value="UbiA"/>
    <property type="match status" value="1"/>
</dbReference>
<dbReference type="InterPro" id="IPR006370">
    <property type="entry name" value="HB_polyprenyltransferase-like"/>
</dbReference>
<dbReference type="InterPro" id="IPR039653">
    <property type="entry name" value="Prenyltransferase"/>
</dbReference>
<dbReference type="InterPro" id="IPR000537">
    <property type="entry name" value="UbiA_prenyltransferase"/>
</dbReference>
<dbReference type="InterPro" id="IPR030470">
    <property type="entry name" value="UbiA_prenylTrfase_CS"/>
</dbReference>
<dbReference type="InterPro" id="IPR044878">
    <property type="entry name" value="UbiA_sf"/>
</dbReference>
<dbReference type="NCBIfam" id="TIGR01474">
    <property type="entry name" value="ubiA_proteo"/>
    <property type="match status" value="1"/>
</dbReference>
<dbReference type="PANTHER" id="PTHR11048:SF28">
    <property type="entry name" value="4-HYDROXYBENZOATE POLYPRENYLTRANSFERASE, MITOCHONDRIAL"/>
    <property type="match status" value="1"/>
</dbReference>
<dbReference type="PANTHER" id="PTHR11048">
    <property type="entry name" value="PRENYLTRANSFERASES"/>
    <property type="match status" value="1"/>
</dbReference>
<dbReference type="Pfam" id="PF01040">
    <property type="entry name" value="UbiA"/>
    <property type="match status" value="1"/>
</dbReference>
<dbReference type="PROSITE" id="PS00943">
    <property type="entry name" value="UBIA"/>
    <property type="match status" value="1"/>
</dbReference>
<reference key="1">
    <citation type="journal article" date="2011" name="Stand. Genomic Sci.">
        <title>Complete genome sequence of the halophilic and highly halotolerant Chromohalobacter salexigens type strain (1H11(T)).</title>
        <authorList>
            <person name="Copeland A."/>
            <person name="O'Connor K."/>
            <person name="Lucas S."/>
            <person name="Lapidus A."/>
            <person name="Berry K.W."/>
            <person name="Detter J.C."/>
            <person name="Del Rio T.G."/>
            <person name="Hammon N."/>
            <person name="Dalin E."/>
            <person name="Tice H."/>
            <person name="Pitluck S."/>
            <person name="Bruce D."/>
            <person name="Goodwin L."/>
            <person name="Han C."/>
            <person name="Tapia R."/>
            <person name="Saunders E."/>
            <person name="Schmutz J."/>
            <person name="Brettin T."/>
            <person name="Larimer F."/>
            <person name="Land M."/>
            <person name="Hauser L."/>
            <person name="Vargas C."/>
            <person name="Nieto J.J."/>
            <person name="Kyrpides N.C."/>
            <person name="Ivanova N."/>
            <person name="Goker M."/>
            <person name="Klenk H.P."/>
            <person name="Csonka L.N."/>
            <person name="Woyke T."/>
        </authorList>
    </citation>
    <scope>NUCLEOTIDE SEQUENCE [LARGE SCALE GENOMIC DNA]</scope>
    <source>
        <strain>ATCC BAA-138 / DSM 3043 / CIP 106854 / NCIMB 13768 / 1H11</strain>
    </source>
</reference>
<name>UBIA_CHRSD</name>
<keyword id="KW-0997">Cell inner membrane</keyword>
<keyword id="KW-1003">Cell membrane</keyword>
<keyword id="KW-0460">Magnesium</keyword>
<keyword id="KW-0472">Membrane</keyword>
<keyword id="KW-1185">Reference proteome</keyword>
<keyword id="KW-0808">Transferase</keyword>
<keyword id="KW-0812">Transmembrane</keyword>
<keyword id="KW-1133">Transmembrane helix</keyword>
<keyword id="KW-0831">Ubiquinone biosynthesis</keyword>
<organism>
    <name type="scientific">Chromohalobacter salexigens (strain ATCC BAA-138 / DSM 3043 / CIP 106854 / NCIMB 13768 / 1H11)</name>
    <dbReference type="NCBI Taxonomy" id="290398"/>
    <lineage>
        <taxon>Bacteria</taxon>
        <taxon>Pseudomonadati</taxon>
        <taxon>Pseudomonadota</taxon>
        <taxon>Gammaproteobacteria</taxon>
        <taxon>Oceanospirillales</taxon>
        <taxon>Halomonadaceae</taxon>
        <taxon>Chromohalobacter</taxon>
    </lineage>
</organism>
<accession>Q1QSG2</accession>